<gene>
    <name evidence="1" type="primary">rpl36</name>
</gene>
<protein>
    <recommendedName>
        <fullName evidence="1">Large ribosomal subunit protein bL36c</fullName>
    </recommendedName>
    <alternativeName>
        <fullName evidence="3">50S ribosomal protein L36, chloroplastic</fullName>
    </alternativeName>
</protein>
<name>RK36_ADICA</name>
<proteinExistence type="evidence at transcript level"/>
<geneLocation type="chloroplast"/>
<keyword id="KW-0150">Chloroplast</keyword>
<keyword id="KW-0934">Plastid</keyword>
<keyword id="KW-0687">Ribonucleoprotein</keyword>
<keyword id="KW-0689">Ribosomal protein</keyword>
<keyword id="KW-0691">RNA editing</keyword>
<comment type="subcellular location">
    <subcellularLocation>
        <location>Plastid</location>
        <location>Chloroplast</location>
    </subcellularLocation>
</comment>
<comment type="RNA editing">
    <location>
        <position position="1" evidence="2"/>
    </location>
    <text>The initiator methionine is created by RNA editing.</text>
</comment>
<comment type="similarity">
    <text evidence="1">Belongs to the bacterial ribosomal protein bL36 family.</text>
</comment>
<accession>Q85FI9</accession>
<sequence length="37" mass="4542">MKIRASIRKICEKCRLIRRRRRIMVICCNSKHKQKQG</sequence>
<dbReference type="EMBL" id="AY178864">
    <property type="protein sequence ID" value="AAP29424.2"/>
    <property type="molecule type" value="Genomic_DNA"/>
</dbReference>
<dbReference type="RefSeq" id="NP_848093.2">
    <property type="nucleotide sequence ID" value="NC_004766.1"/>
</dbReference>
<dbReference type="SMR" id="Q85FI9"/>
<dbReference type="GeneID" id="807385"/>
<dbReference type="GO" id="GO:0009507">
    <property type="term" value="C:chloroplast"/>
    <property type="evidence" value="ECO:0007669"/>
    <property type="project" value="UniProtKB-SubCell"/>
</dbReference>
<dbReference type="GO" id="GO:1990904">
    <property type="term" value="C:ribonucleoprotein complex"/>
    <property type="evidence" value="ECO:0007669"/>
    <property type="project" value="UniProtKB-KW"/>
</dbReference>
<dbReference type="GO" id="GO:0005840">
    <property type="term" value="C:ribosome"/>
    <property type="evidence" value="ECO:0007669"/>
    <property type="project" value="UniProtKB-KW"/>
</dbReference>
<dbReference type="GO" id="GO:0003735">
    <property type="term" value="F:structural constituent of ribosome"/>
    <property type="evidence" value="ECO:0007669"/>
    <property type="project" value="InterPro"/>
</dbReference>
<dbReference type="GO" id="GO:0006412">
    <property type="term" value="P:translation"/>
    <property type="evidence" value="ECO:0007669"/>
    <property type="project" value="UniProtKB-UniRule"/>
</dbReference>
<dbReference type="HAMAP" id="MF_00251">
    <property type="entry name" value="Ribosomal_bL36"/>
    <property type="match status" value="1"/>
</dbReference>
<dbReference type="InterPro" id="IPR000473">
    <property type="entry name" value="Ribosomal_bL36"/>
</dbReference>
<dbReference type="InterPro" id="IPR035977">
    <property type="entry name" value="Ribosomal_bL36_sp"/>
</dbReference>
<dbReference type="NCBIfam" id="TIGR01022">
    <property type="entry name" value="rpmJ_bact"/>
    <property type="match status" value="1"/>
</dbReference>
<dbReference type="PANTHER" id="PTHR42888">
    <property type="entry name" value="50S RIBOSOMAL PROTEIN L36, CHLOROPLASTIC"/>
    <property type="match status" value="1"/>
</dbReference>
<dbReference type="PANTHER" id="PTHR42888:SF1">
    <property type="entry name" value="LARGE RIBOSOMAL SUBUNIT PROTEIN BL36C"/>
    <property type="match status" value="1"/>
</dbReference>
<dbReference type="Pfam" id="PF00444">
    <property type="entry name" value="Ribosomal_L36"/>
    <property type="match status" value="1"/>
</dbReference>
<dbReference type="SUPFAM" id="SSF57840">
    <property type="entry name" value="Ribosomal protein L36"/>
    <property type="match status" value="1"/>
</dbReference>
<dbReference type="PROSITE" id="PS00828">
    <property type="entry name" value="RIBOSOMAL_L36"/>
    <property type="match status" value="1"/>
</dbReference>
<feature type="chain" id="PRO_0000126307" description="Large ribosomal subunit protein bL36c">
    <location>
        <begin position="1"/>
        <end position="37"/>
    </location>
</feature>
<evidence type="ECO:0000255" key="1">
    <source>
        <dbReference type="HAMAP-Rule" id="MF_00251"/>
    </source>
</evidence>
<evidence type="ECO:0000269" key="2">
    <source>
    </source>
</evidence>
<evidence type="ECO:0000305" key="3"/>
<organism>
    <name type="scientific">Adiantum capillus-veneris</name>
    <name type="common">Maidenhair fern</name>
    <dbReference type="NCBI Taxonomy" id="13818"/>
    <lineage>
        <taxon>Eukaryota</taxon>
        <taxon>Viridiplantae</taxon>
        <taxon>Streptophyta</taxon>
        <taxon>Embryophyta</taxon>
        <taxon>Tracheophyta</taxon>
        <taxon>Polypodiopsida</taxon>
        <taxon>Polypodiidae</taxon>
        <taxon>Polypodiales</taxon>
        <taxon>Pteridineae</taxon>
        <taxon>Pteridaceae</taxon>
        <taxon>Vittarioideae</taxon>
        <taxon>Adiantum</taxon>
    </lineage>
</organism>
<reference key="1">
    <citation type="journal article" date="2003" name="DNA Res.">
        <title>Complete nucleotide sequence of the chloroplast genome from a leptosporangiate fern, Adiantum capillus-veneris L.</title>
        <authorList>
            <person name="Wolf P.G."/>
            <person name="Rowe C.A."/>
            <person name="Sinclair R.B."/>
            <person name="Hasebe M."/>
        </authorList>
    </citation>
    <scope>NUCLEOTIDE SEQUENCE [LARGE SCALE GENOMIC DNA]</scope>
</reference>
<reference key="2">
    <citation type="journal article" date="2004" name="Gene">
        <title>High levels of RNA editing in a vascular plant chloroplast genome: analysis of transcripts from the fern Adiantum capillus-veneris.</title>
        <authorList>
            <person name="Wolf P.G."/>
            <person name="Rowe C.A."/>
            <person name="Hasebe M."/>
        </authorList>
    </citation>
    <scope>NUCLEOTIDE SEQUENCE [GENOMIC DNA]</scope>
    <scope>RNA EDITING</scope>
    <source>
        <tissue>Frond</tissue>
    </source>
</reference>